<reference key="1">
    <citation type="journal article" date="2002" name="Nature">
        <title>Complete genome sequence of the model actinomycete Streptomyces coelicolor A3(2).</title>
        <authorList>
            <person name="Bentley S.D."/>
            <person name="Chater K.F."/>
            <person name="Cerdeno-Tarraga A.-M."/>
            <person name="Challis G.L."/>
            <person name="Thomson N.R."/>
            <person name="James K.D."/>
            <person name="Harris D.E."/>
            <person name="Quail M.A."/>
            <person name="Kieser H."/>
            <person name="Harper D."/>
            <person name="Bateman A."/>
            <person name="Brown S."/>
            <person name="Chandra G."/>
            <person name="Chen C.W."/>
            <person name="Collins M."/>
            <person name="Cronin A."/>
            <person name="Fraser A."/>
            <person name="Goble A."/>
            <person name="Hidalgo J."/>
            <person name="Hornsby T."/>
            <person name="Howarth S."/>
            <person name="Huang C.-H."/>
            <person name="Kieser T."/>
            <person name="Larke L."/>
            <person name="Murphy L.D."/>
            <person name="Oliver K."/>
            <person name="O'Neil S."/>
            <person name="Rabbinowitsch E."/>
            <person name="Rajandream M.A."/>
            <person name="Rutherford K.M."/>
            <person name="Rutter S."/>
            <person name="Seeger K."/>
            <person name="Saunders D."/>
            <person name="Sharp S."/>
            <person name="Squares R."/>
            <person name="Squares S."/>
            <person name="Taylor K."/>
            <person name="Warren T."/>
            <person name="Wietzorrek A."/>
            <person name="Woodward J.R."/>
            <person name="Barrell B.G."/>
            <person name="Parkhill J."/>
            <person name="Hopwood D.A."/>
        </authorList>
    </citation>
    <scope>NUCLEOTIDE SEQUENCE [LARGE SCALE GENOMIC DNA]</scope>
    <source>
        <strain>ATCC BAA-471 / A3(2) / M145</strain>
    </source>
</reference>
<keyword id="KW-0067">ATP-binding</keyword>
<keyword id="KW-0131">Cell cycle</keyword>
<keyword id="KW-0132">Cell division</keyword>
<keyword id="KW-0133">Cell shape</keyword>
<keyword id="KW-0961">Cell wall biogenesis/degradation</keyword>
<keyword id="KW-0963">Cytoplasm</keyword>
<keyword id="KW-0436">Ligase</keyword>
<keyword id="KW-0547">Nucleotide-binding</keyword>
<keyword id="KW-0573">Peptidoglycan synthesis</keyword>
<keyword id="KW-1185">Reference proteome</keyword>
<organism>
    <name type="scientific">Streptomyces coelicolor (strain ATCC BAA-471 / A3(2) / M145)</name>
    <dbReference type="NCBI Taxonomy" id="100226"/>
    <lineage>
        <taxon>Bacteria</taxon>
        <taxon>Bacillati</taxon>
        <taxon>Actinomycetota</taxon>
        <taxon>Actinomycetes</taxon>
        <taxon>Kitasatosporales</taxon>
        <taxon>Streptomycetaceae</taxon>
        <taxon>Streptomyces</taxon>
        <taxon>Streptomyces albidoflavus group</taxon>
    </lineage>
</organism>
<gene>
    <name evidence="1" type="primary">murC</name>
    <name type="ordered locus">SCO6060</name>
    <name type="ORF">SC9B1.07</name>
</gene>
<protein>
    <recommendedName>
        <fullName evidence="1">UDP-N-acetylmuramate--L-alanine ligase</fullName>
        <ecNumber evidence="1">6.3.2.8</ecNumber>
    </recommendedName>
    <alternativeName>
        <fullName evidence="1">UDP-N-acetylmuramoyl-L-alanine synthetase</fullName>
    </alternativeName>
</protein>
<accession>Q9X827</accession>
<name>MURC_STRCO</name>
<comment type="function">
    <text evidence="1">Cell wall formation.</text>
</comment>
<comment type="catalytic activity">
    <reaction evidence="1">
        <text>UDP-N-acetyl-alpha-D-muramate + L-alanine + ATP = UDP-N-acetyl-alpha-D-muramoyl-L-alanine + ADP + phosphate + H(+)</text>
        <dbReference type="Rhea" id="RHEA:23372"/>
        <dbReference type="ChEBI" id="CHEBI:15378"/>
        <dbReference type="ChEBI" id="CHEBI:30616"/>
        <dbReference type="ChEBI" id="CHEBI:43474"/>
        <dbReference type="ChEBI" id="CHEBI:57972"/>
        <dbReference type="ChEBI" id="CHEBI:70757"/>
        <dbReference type="ChEBI" id="CHEBI:83898"/>
        <dbReference type="ChEBI" id="CHEBI:456216"/>
        <dbReference type="EC" id="6.3.2.8"/>
    </reaction>
</comment>
<comment type="pathway">
    <text evidence="1">Cell wall biogenesis; peptidoglycan biosynthesis.</text>
</comment>
<comment type="subcellular location">
    <subcellularLocation>
        <location evidence="1">Cytoplasm</location>
    </subcellularLocation>
</comment>
<comment type="similarity">
    <text evidence="1">Belongs to the MurCDEF family.</text>
</comment>
<feature type="chain" id="PRO_0000182164" description="UDP-N-acetylmuramate--L-alanine ligase">
    <location>
        <begin position="1"/>
        <end position="462"/>
    </location>
</feature>
<feature type="binding site" evidence="1">
    <location>
        <begin position="117"/>
        <end position="123"/>
    </location>
    <ligand>
        <name>ATP</name>
        <dbReference type="ChEBI" id="CHEBI:30616"/>
    </ligand>
</feature>
<proteinExistence type="inferred from homology"/>
<evidence type="ECO:0000255" key="1">
    <source>
        <dbReference type="HAMAP-Rule" id="MF_00046"/>
    </source>
</evidence>
<sequence length="462" mass="47634">MAPGLPTAMDRPHFIGIGGAGMSGIAKILAQRGAEVAGSDAKESATADALRALGATVHIGHAAEHLAADASCVVVSSAIREDNPELVRAAELGIPVVHRSDALAALMNGLRPIAVAGTHGKTTTTSMLAVSLSELDLGPSYAIGGDLDAPGSNALHGEGEIFVAEADESDRSFHKYAPEVAIVLNVELDHHANYASMDEIYESFETFAGKIVPGGTLVIAADHEGARELTRRLAGRVRTVTYGESEDADVRILSVVPQGLKSEVTVVLDGAELTFAVSVPGRHYAHNAVAALAAGAALGVPAAELAPALAAYTGVKRRLQLKGEAAGVQVVDSYAHHPTEMTADLEAMRAAVGDARILVLFQPHLFSRTQELGKEMGQALALADASVVLDIYPAREDPIPGVTSELIVEAARAAGADVTPVHDKDASPALVAGMAKAGDLVLTMGAGDVTDLGPRILDELSK</sequence>
<dbReference type="EC" id="6.3.2.8" evidence="1"/>
<dbReference type="EMBL" id="AL939126">
    <property type="protein sequence ID" value="CAB41553.2"/>
    <property type="molecule type" value="Genomic_DNA"/>
</dbReference>
<dbReference type="PIR" id="T35852">
    <property type="entry name" value="T35852"/>
</dbReference>
<dbReference type="RefSeq" id="NP_630169.1">
    <property type="nucleotide sequence ID" value="NC_003888.3"/>
</dbReference>
<dbReference type="RefSeq" id="WP_011030625.1">
    <property type="nucleotide sequence ID" value="NZ_VNID01000009.1"/>
</dbReference>
<dbReference type="SMR" id="Q9X827"/>
<dbReference type="FunCoup" id="Q9X827">
    <property type="interactions" value="63"/>
</dbReference>
<dbReference type="STRING" id="100226.gene:17763719"/>
<dbReference type="PaxDb" id="100226-SCO6060"/>
<dbReference type="KEGG" id="sco:SCO6060"/>
<dbReference type="PATRIC" id="fig|100226.15.peg.6161"/>
<dbReference type="eggNOG" id="COG0773">
    <property type="taxonomic scope" value="Bacteria"/>
</dbReference>
<dbReference type="HOGENOM" id="CLU_028104_2_2_11"/>
<dbReference type="InParanoid" id="Q9X827"/>
<dbReference type="OrthoDB" id="9804126at2"/>
<dbReference type="PhylomeDB" id="Q9X827"/>
<dbReference type="UniPathway" id="UPA00219"/>
<dbReference type="Proteomes" id="UP000001973">
    <property type="component" value="Chromosome"/>
</dbReference>
<dbReference type="GO" id="GO:0005737">
    <property type="term" value="C:cytoplasm"/>
    <property type="evidence" value="ECO:0007669"/>
    <property type="project" value="UniProtKB-SubCell"/>
</dbReference>
<dbReference type="GO" id="GO:0005524">
    <property type="term" value="F:ATP binding"/>
    <property type="evidence" value="ECO:0007669"/>
    <property type="project" value="UniProtKB-UniRule"/>
</dbReference>
<dbReference type="GO" id="GO:0008763">
    <property type="term" value="F:UDP-N-acetylmuramate-L-alanine ligase activity"/>
    <property type="evidence" value="ECO:0007669"/>
    <property type="project" value="UniProtKB-UniRule"/>
</dbReference>
<dbReference type="GO" id="GO:0051301">
    <property type="term" value="P:cell division"/>
    <property type="evidence" value="ECO:0007669"/>
    <property type="project" value="UniProtKB-KW"/>
</dbReference>
<dbReference type="GO" id="GO:0071555">
    <property type="term" value="P:cell wall organization"/>
    <property type="evidence" value="ECO:0007669"/>
    <property type="project" value="UniProtKB-KW"/>
</dbReference>
<dbReference type="GO" id="GO:0009252">
    <property type="term" value="P:peptidoglycan biosynthetic process"/>
    <property type="evidence" value="ECO:0007669"/>
    <property type="project" value="UniProtKB-UniRule"/>
</dbReference>
<dbReference type="GO" id="GO:0008360">
    <property type="term" value="P:regulation of cell shape"/>
    <property type="evidence" value="ECO:0007669"/>
    <property type="project" value="UniProtKB-KW"/>
</dbReference>
<dbReference type="Gene3D" id="3.90.190.20">
    <property type="entry name" value="Mur ligase, C-terminal domain"/>
    <property type="match status" value="1"/>
</dbReference>
<dbReference type="Gene3D" id="3.40.1190.10">
    <property type="entry name" value="Mur-like, catalytic domain"/>
    <property type="match status" value="1"/>
</dbReference>
<dbReference type="Gene3D" id="3.40.50.720">
    <property type="entry name" value="NAD(P)-binding Rossmann-like Domain"/>
    <property type="match status" value="1"/>
</dbReference>
<dbReference type="HAMAP" id="MF_00046">
    <property type="entry name" value="MurC"/>
    <property type="match status" value="1"/>
</dbReference>
<dbReference type="InterPro" id="IPR036565">
    <property type="entry name" value="Mur-like_cat_sf"/>
</dbReference>
<dbReference type="InterPro" id="IPR004101">
    <property type="entry name" value="Mur_ligase_C"/>
</dbReference>
<dbReference type="InterPro" id="IPR036615">
    <property type="entry name" value="Mur_ligase_C_dom_sf"/>
</dbReference>
<dbReference type="InterPro" id="IPR013221">
    <property type="entry name" value="Mur_ligase_cen"/>
</dbReference>
<dbReference type="InterPro" id="IPR000713">
    <property type="entry name" value="Mur_ligase_N"/>
</dbReference>
<dbReference type="InterPro" id="IPR050061">
    <property type="entry name" value="MurCDEF_pg_biosynth"/>
</dbReference>
<dbReference type="InterPro" id="IPR005758">
    <property type="entry name" value="UDP-N-AcMur_Ala_ligase_MurC"/>
</dbReference>
<dbReference type="NCBIfam" id="TIGR01082">
    <property type="entry name" value="murC"/>
    <property type="match status" value="1"/>
</dbReference>
<dbReference type="PANTHER" id="PTHR43445:SF3">
    <property type="entry name" value="UDP-N-ACETYLMURAMATE--L-ALANINE LIGASE"/>
    <property type="match status" value="1"/>
</dbReference>
<dbReference type="PANTHER" id="PTHR43445">
    <property type="entry name" value="UDP-N-ACETYLMURAMATE--L-ALANINE LIGASE-RELATED"/>
    <property type="match status" value="1"/>
</dbReference>
<dbReference type="Pfam" id="PF01225">
    <property type="entry name" value="Mur_ligase"/>
    <property type="match status" value="1"/>
</dbReference>
<dbReference type="Pfam" id="PF02875">
    <property type="entry name" value="Mur_ligase_C"/>
    <property type="match status" value="1"/>
</dbReference>
<dbReference type="Pfam" id="PF08245">
    <property type="entry name" value="Mur_ligase_M"/>
    <property type="match status" value="1"/>
</dbReference>
<dbReference type="SUPFAM" id="SSF51984">
    <property type="entry name" value="MurCD N-terminal domain"/>
    <property type="match status" value="1"/>
</dbReference>
<dbReference type="SUPFAM" id="SSF53623">
    <property type="entry name" value="MurD-like peptide ligases, catalytic domain"/>
    <property type="match status" value="1"/>
</dbReference>
<dbReference type="SUPFAM" id="SSF53244">
    <property type="entry name" value="MurD-like peptide ligases, peptide-binding domain"/>
    <property type="match status" value="1"/>
</dbReference>